<name>GUNA_PAEBA</name>
<keyword id="KW-0119">Carbohydrate metabolism</keyword>
<keyword id="KW-0136">Cellulose degradation</keyword>
<keyword id="KW-0326">Glycosidase</keyword>
<keyword id="KW-0378">Hydrolase</keyword>
<keyword id="KW-0624">Polysaccharide degradation</keyword>
<keyword id="KW-0964">Secreted</keyword>
<keyword id="KW-0732">Signal</keyword>
<dbReference type="EC" id="3.2.1.4"/>
<dbReference type="EMBL" id="Y12512">
    <property type="protein sequence ID" value="CAA73113.1"/>
    <property type="molecule type" value="Genomic_DNA"/>
</dbReference>
<dbReference type="RefSeq" id="WP_110895944.1">
    <property type="nucleotide sequence ID" value="NZ_CP054614.1"/>
</dbReference>
<dbReference type="SMR" id="O08342"/>
<dbReference type="CAZy" id="GH5">
    <property type="family name" value="Glycoside Hydrolase Family 5"/>
</dbReference>
<dbReference type="OrthoDB" id="9800955at2"/>
<dbReference type="GO" id="GO:0009986">
    <property type="term" value="C:cell surface"/>
    <property type="evidence" value="ECO:0007669"/>
    <property type="project" value="TreeGrafter"/>
</dbReference>
<dbReference type="GO" id="GO:0005576">
    <property type="term" value="C:extracellular region"/>
    <property type="evidence" value="ECO:0007669"/>
    <property type="project" value="UniProtKB-SubCell"/>
</dbReference>
<dbReference type="GO" id="GO:0008422">
    <property type="term" value="F:beta-glucosidase activity"/>
    <property type="evidence" value="ECO:0007669"/>
    <property type="project" value="TreeGrafter"/>
</dbReference>
<dbReference type="GO" id="GO:0008810">
    <property type="term" value="F:cellulase activity"/>
    <property type="evidence" value="ECO:0007669"/>
    <property type="project" value="UniProtKB-EC"/>
</dbReference>
<dbReference type="GO" id="GO:0030245">
    <property type="term" value="P:cellulose catabolic process"/>
    <property type="evidence" value="ECO:0007669"/>
    <property type="project" value="UniProtKB-KW"/>
</dbReference>
<dbReference type="Gene3D" id="3.20.20.80">
    <property type="entry name" value="Glycosidases"/>
    <property type="match status" value="1"/>
</dbReference>
<dbReference type="InterPro" id="IPR001547">
    <property type="entry name" value="Glyco_hydro_5"/>
</dbReference>
<dbReference type="InterPro" id="IPR018087">
    <property type="entry name" value="Glyco_hydro_5_CS"/>
</dbReference>
<dbReference type="InterPro" id="IPR017853">
    <property type="entry name" value="Glycoside_hydrolase_SF"/>
</dbReference>
<dbReference type="InterPro" id="IPR050386">
    <property type="entry name" value="Glycosyl_hydrolase_5"/>
</dbReference>
<dbReference type="PANTHER" id="PTHR31297:SF41">
    <property type="entry name" value="ENDOGLUCANASE, PUTATIVE (AFU_ORTHOLOGUE AFUA_5G01830)-RELATED"/>
    <property type="match status" value="1"/>
</dbReference>
<dbReference type="PANTHER" id="PTHR31297">
    <property type="entry name" value="GLUCAN ENDO-1,6-BETA-GLUCOSIDASE B"/>
    <property type="match status" value="1"/>
</dbReference>
<dbReference type="Pfam" id="PF00150">
    <property type="entry name" value="Cellulase"/>
    <property type="match status" value="1"/>
</dbReference>
<dbReference type="SUPFAM" id="SSF51445">
    <property type="entry name" value="(Trans)glycosidases"/>
    <property type="match status" value="1"/>
</dbReference>
<dbReference type="PROSITE" id="PS00659">
    <property type="entry name" value="GLYCOSYL_HYDROL_F5"/>
    <property type="match status" value="1"/>
</dbReference>
<reference key="1">
    <citation type="journal article" date="1998" name="Appl. Microbiol. Biotechnol.">
        <title>Cloning of a new endoglucanase gene from Bacillus sp. BP-23 and characterisation of the enzyme. Performance in paper manufacture from cereal straw.</title>
        <authorList>
            <person name="Blanco A."/>
            <person name="Diaz P."/>
            <person name="Martinez J."/>
            <person name="Vidal T."/>
            <person name="Torres A.L."/>
            <person name="Pastor F.I.J."/>
        </authorList>
    </citation>
    <scope>NUCLEOTIDE SEQUENCE [GENOMIC DNA]</scope>
    <scope>FUNCTION</scope>
    <scope>CATALYTIC ACTIVITY</scope>
    <scope>SUBSTRATE SPECIFICITY</scope>
    <scope>BIOTECHNOLOGY</scope>
    <scope>ACTIVITY REGULATION</scope>
    <scope>BIOPHYSICOCHEMICAL PROPERTIES</scope>
    <scope>SUBCELLULAR LOCATION</scope>
    <source>
        <strain>DSM 15478 / BCRC 17560 / CECT 7022 / CIP 108718 / BP-23</strain>
    </source>
</reference>
<gene>
    <name type="primary">celA</name>
</gene>
<organism>
    <name type="scientific">Paenibacillus barcinonensis</name>
    <dbReference type="NCBI Taxonomy" id="198119"/>
    <lineage>
        <taxon>Bacteria</taxon>
        <taxon>Bacillati</taxon>
        <taxon>Bacillota</taxon>
        <taxon>Bacilli</taxon>
        <taxon>Bacillales</taxon>
        <taxon>Paenibacillaceae</taxon>
        <taxon>Paenibacillus</taxon>
    </lineage>
</organism>
<evidence type="ECO:0000250" key="1"/>
<evidence type="ECO:0000269" key="2">
    <source>
    </source>
</evidence>
<evidence type="ECO:0000305" key="3"/>
<accession>O08342</accession>
<proteinExistence type="evidence at protein level"/>
<comment type="function">
    <text evidence="2">Endoglucanase with high activity on carboxymethylcellulose (CMC) and lichenan, but not active on Avicel.</text>
</comment>
<comment type="catalytic activity">
    <reaction evidence="2">
        <text>Endohydrolysis of (1-&gt;4)-beta-D-glucosidic linkages in cellulose, lichenin and cereal beta-D-glucans.</text>
        <dbReference type="EC" id="3.2.1.4"/>
    </reaction>
</comment>
<comment type="activity regulation">
    <text evidence="2">Strongly inhibited by Hg(2+), Ag(+) and Fe(3+). To a lesser extent, is also inhibited by Pb(2+), Mn(2+), Sn(2+) and Cu(2+). By contrast, Ni(2+), Zn(2+), Co(2+), Ba(2+) and NH(4)(+) do not affect enzyme activity, while 10 mM Ca(2+), and Mg(2+) produce a stimulating effect. Is also strongly inhibited by chemicals such as N-bromosuccinimide and dimethyl(2-dihydroxy-5-nitrobenzyl)sulphonium bromide. Is not affected by N-acetylimidazole.</text>
</comment>
<comment type="biophysicochemical properties">
    <phDependence>
        <text evidence="2">Optimum pH is 4.0. Highly stable at acid pH. Retains 100% of its activity after 90 minutes incubation at pH 4.5 and 45 degrees Celsius, and 95% of the initial activity is found after 15 days incubation at room temperature and pH 4.5.</text>
    </phDependence>
    <temperatureDependence>
        <text evidence="2">Optimum temperature is 40 degrees Celsius. Shows 98% and 51% of its maximum activity at 45 and 55 degrees Celsius, respectively.</text>
    </temperatureDependence>
</comment>
<comment type="subcellular location">
    <subcellularLocation>
        <location evidence="2">Secreted</location>
    </subcellularLocation>
</comment>
<comment type="biotechnology">
    <text evidence="2">Study of the performance of endoglucanase A on paper manufacture from agricultural fibers shows that treatment with the enzyme improves the properties of the pulp and the quality of paper. CelA treatment enhances the physical properties (stretch and tensile index) of paper from wheat straw, while dewatering properties are slightly diminished.</text>
</comment>
<comment type="similarity">
    <text evidence="3">Belongs to the glycosyl hydrolase 5 (cellulase A) family.</text>
</comment>
<sequence length="400" mass="44799">MTKTFKKFSIAGLALLFMATAAFAGWSTKASAADMRSLTAAQITAEMGAGWNLGNQLEATVNGTPNETSWGNPTITPELIKKVKAAGFKTIRIPVSYLNYIGSAPNYTVNASWLNRIQQVVDYAYNEGLYVVINMHGDGFHSIPGSWLHVNSSNQNVIRDKYQKVWQQVATRFSAYNERLIFESMNEVFDGNYNNPNTSYYGNLNAYNQIFVDTVRKTGGNNNARWLLVPGWNTNIDYTVGNYGFVVPTDNFRSSAIPSSQKRIMISAHYYSPWDFAGEENGNITQWGATATNPAKRSTWGQEDYLDSQFKSMYDKFVTQGYPVVMGEFGSIDKSSYDSSNNNYRAVYAKAVTATAKKYKLVPVYWDNGFNGQHGFALFNRFNNTVTQQNIINAIMQGMQ</sequence>
<feature type="signal peptide" evidence="3">
    <location>
        <begin position="1"/>
        <end position="32"/>
    </location>
</feature>
<feature type="chain" id="PRO_0000371421" description="Endoglucanase A">
    <location>
        <begin position="33"/>
        <end position="400"/>
    </location>
</feature>
<feature type="active site" description="Proton donor" evidence="1">
    <location>
        <position position="187"/>
    </location>
</feature>
<feature type="active site" description="Nucleophile" evidence="1">
    <location>
        <position position="328"/>
    </location>
</feature>
<protein>
    <recommendedName>
        <fullName>Endoglucanase A</fullName>
        <ecNumber>3.2.1.4</ecNumber>
    </recommendedName>
    <alternativeName>
        <fullName>Cellulase A</fullName>
    </alternativeName>
    <alternativeName>
        <fullName>Endo-1,4-beta-D-glucanase A</fullName>
    </alternativeName>
</protein>